<evidence type="ECO:0000255" key="1">
    <source>
        <dbReference type="HAMAP-Rule" id="MF_00501"/>
    </source>
</evidence>
<evidence type="ECO:0000305" key="2"/>
<protein>
    <recommendedName>
        <fullName evidence="1">Large ribosomal subunit protein bL31</fullName>
    </recommendedName>
    <alternativeName>
        <fullName evidence="2">50S ribosomal protein L31</fullName>
    </alternativeName>
</protein>
<organism>
    <name type="scientific">Mesoplasma florum (strain ATCC 33453 / NBRC 100688 / NCTC 11704 / L1)</name>
    <name type="common">Acholeplasma florum</name>
    <dbReference type="NCBI Taxonomy" id="265311"/>
    <lineage>
        <taxon>Bacteria</taxon>
        <taxon>Bacillati</taxon>
        <taxon>Mycoplasmatota</taxon>
        <taxon>Mollicutes</taxon>
        <taxon>Entomoplasmatales</taxon>
        <taxon>Entomoplasmataceae</taxon>
        <taxon>Mesoplasma</taxon>
    </lineage>
</organism>
<accession>Q6F0H9</accession>
<proteinExistence type="inferred from homology"/>
<reference key="1">
    <citation type="submission" date="2004-06" db="EMBL/GenBank/DDBJ databases">
        <authorList>
            <person name="Birren B.W."/>
            <person name="Stange-Thomann N."/>
            <person name="Hafez N."/>
            <person name="DeCaprio D."/>
            <person name="Fisher S."/>
            <person name="Butler J."/>
            <person name="Elkins T."/>
            <person name="Kodira C.D."/>
            <person name="Major J."/>
            <person name="Wang S."/>
            <person name="Nicol R."/>
            <person name="Nusbaum C."/>
        </authorList>
    </citation>
    <scope>NUCLEOTIDE SEQUENCE [LARGE SCALE GENOMIC DNA]</scope>
    <source>
        <strain>ATCC 33453 / NBRC 100688 / NCTC 11704 / L1</strain>
    </source>
</reference>
<gene>
    <name evidence="1" type="primary">rpmE</name>
    <name type="ordered locus">Mfl638</name>
</gene>
<name>RL31_MESFL</name>
<sequence length="92" mass="10564">MPKKDIQPKYFEEAKFICTTCANEFICGTTKREEMRIDVCSNCHPFFSGAQNFANTTGRVEQFKSKFARKEAINATAQKNSEDQKSKNKENK</sequence>
<dbReference type="EMBL" id="AE017263">
    <property type="protein sequence ID" value="AAT75994.1"/>
    <property type="molecule type" value="Genomic_DNA"/>
</dbReference>
<dbReference type="RefSeq" id="WP_011183534.1">
    <property type="nucleotide sequence ID" value="NC_006055.1"/>
</dbReference>
<dbReference type="RefSeq" id="YP_053878.1">
    <property type="nucleotide sequence ID" value="NC_006055.1"/>
</dbReference>
<dbReference type="STRING" id="265311.Mfl638"/>
<dbReference type="PaxDb" id="265311-Mfl638"/>
<dbReference type="EnsemblBacteria" id="AAT75994">
    <property type="protein sequence ID" value="AAT75994"/>
    <property type="gene ID" value="Mfl638"/>
</dbReference>
<dbReference type="GeneID" id="2897897"/>
<dbReference type="KEGG" id="mfl:Mfl638"/>
<dbReference type="PATRIC" id="fig|265311.5.peg.640"/>
<dbReference type="eggNOG" id="COG0254">
    <property type="taxonomic scope" value="Bacteria"/>
</dbReference>
<dbReference type="HOGENOM" id="CLU_114306_4_2_14"/>
<dbReference type="OrthoDB" id="9803251at2"/>
<dbReference type="Proteomes" id="UP000006647">
    <property type="component" value="Chromosome"/>
</dbReference>
<dbReference type="GO" id="GO:1990904">
    <property type="term" value="C:ribonucleoprotein complex"/>
    <property type="evidence" value="ECO:0007669"/>
    <property type="project" value="UniProtKB-KW"/>
</dbReference>
<dbReference type="GO" id="GO:0005840">
    <property type="term" value="C:ribosome"/>
    <property type="evidence" value="ECO:0007669"/>
    <property type="project" value="UniProtKB-KW"/>
</dbReference>
<dbReference type="GO" id="GO:0019843">
    <property type="term" value="F:rRNA binding"/>
    <property type="evidence" value="ECO:0007669"/>
    <property type="project" value="UniProtKB-KW"/>
</dbReference>
<dbReference type="GO" id="GO:0003735">
    <property type="term" value="F:structural constituent of ribosome"/>
    <property type="evidence" value="ECO:0007669"/>
    <property type="project" value="InterPro"/>
</dbReference>
<dbReference type="GO" id="GO:0006412">
    <property type="term" value="P:translation"/>
    <property type="evidence" value="ECO:0007669"/>
    <property type="project" value="UniProtKB-UniRule"/>
</dbReference>
<dbReference type="Gene3D" id="4.10.830.30">
    <property type="entry name" value="Ribosomal protein L31"/>
    <property type="match status" value="1"/>
</dbReference>
<dbReference type="HAMAP" id="MF_00501">
    <property type="entry name" value="Ribosomal_bL31_1"/>
    <property type="match status" value="1"/>
</dbReference>
<dbReference type="InterPro" id="IPR034704">
    <property type="entry name" value="Ribosomal_bL28/bL31-like_sf"/>
</dbReference>
<dbReference type="InterPro" id="IPR002150">
    <property type="entry name" value="Ribosomal_bL31"/>
</dbReference>
<dbReference type="InterPro" id="IPR027491">
    <property type="entry name" value="Ribosomal_bL31_A"/>
</dbReference>
<dbReference type="InterPro" id="IPR042105">
    <property type="entry name" value="Ribosomal_bL31_sf"/>
</dbReference>
<dbReference type="NCBIfam" id="TIGR00105">
    <property type="entry name" value="L31"/>
    <property type="match status" value="1"/>
</dbReference>
<dbReference type="NCBIfam" id="NF000612">
    <property type="entry name" value="PRK00019.1"/>
    <property type="match status" value="1"/>
</dbReference>
<dbReference type="PANTHER" id="PTHR33280">
    <property type="entry name" value="50S RIBOSOMAL PROTEIN L31, CHLOROPLASTIC"/>
    <property type="match status" value="1"/>
</dbReference>
<dbReference type="PANTHER" id="PTHR33280:SF1">
    <property type="entry name" value="LARGE RIBOSOMAL SUBUNIT PROTEIN BL31C"/>
    <property type="match status" value="1"/>
</dbReference>
<dbReference type="Pfam" id="PF01197">
    <property type="entry name" value="Ribosomal_L31"/>
    <property type="match status" value="1"/>
</dbReference>
<dbReference type="PRINTS" id="PR01249">
    <property type="entry name" value="RIBOSOMALL31"/>
</dbReference>
<dbReference type="SUPFAM" id="SSF143800">
    <property type="entry name" value="L28p-like"/>
    <property type="match status" value="1"/>
</dbReference>
<dbReference type="PROSITE" id="PS01143">
    <property type="entry name" value="RIBOSOMAL_L31"/>
    <property type="match status" value="1"/>
</dbReference>
<feature type="chain" id="PRO_0000173124" description="Large ribosomal subunit protein bL31">
    <location>
        <begin position="1"/>
        <end position="92"/>
    </location>
</feature>
<comment type="function">
    <text evidence="1">Binds the 23S rRNA.</text>
</comment>
<comment type="subunit">
    <text evidence="1">Part of the 50S ribosomal subunit.</text>
</comment>
<comment type="similarity">
    <text evidence="1">Belongs to the bacterial ribosomal protein bL31 family. Type A subfamily.</text>
</comment>
<keyword id="KW-1185">Reference proteome</keyword>
<keyword id="KW-0687">Ribonucleoprotein</keyword>
<keyword id="KW-0689">Ribosomal protein</keyword>
<keyword id="KW-0694">RNA-binding</keyword>
<keyword id="KW-0699">rRNA-binding</keyword>